<organism>
    <name type="scientific">Shigella dysenteriae serotype 1 (strain Sd197)</name>
    <dbReference type="NCBI Taxonomy" id="300267"/>
    <lineage>
        <taxon>Bacteria</taxon>
        <taxon>Pseudomonadati</taxon>
        <taxon>Pseudomonadota</taxon>
        <taxon>Gammaproteobacteria</taxon>
        <taxon>Enterobacterales</taxon>
        <taxon>Enterobacteriaceae</taxon>
        <taxon>Shigella</taxon>
    </lineage>
</organism>
<feature type="chain" id="PRO_1000061370" description="Ureidoglycolate lyase">
    <location>
        <begin position="1"/>
        <end position="160"/>
    </location>
</feature>
<evidence type="ECO:0000255" key="1">
    <source>
        <dbReference type="HAMAP-Rule" id="MF_00616"/>
    </source>
</evidence>
<keyword id="KW-0456">Lyase</keyword>
<keyword id="KW-0659">Purine metabolism</keyword>
<keyword id="KW-1185">Reference proteome</keyword>
<accession>Q32J98</accession>
<name>ALLA_SHIDS</name>
<dbReference type="EC" id="4.3.2.3" evidence="1"/>
<dbReference type="EMBL" id="CP000034">
    <property type="protein sequence ID" value="ABB60609.1"/>
    <property type="molecule type" value="Genomic_DNA"/>
</dbReference>
<dbReference type="RefSeq" id="WP_000776388.1">
    <property type="nucleotide sequence ID" value="NC_007606.1"/>
</dbReference>
<dbReference type="RefSeq" id="YP_402098.1">
    <property type="nucleotide sequence ID" value="NC_007606.1"/>
</dbReference>
<dbReference type="SMR" id="Q32J98"/>
<dbReference type="STRING" id="300267.SDY_0397"/>
<dbReference type="EnsemblBacteria" id="ABB60609">
    <property type="protein sequence ID" value="ABB60609"/>
    <property type="gene ID" value="SDY_0397"/>
</dbReference>
<dbReference type="GeneID" id="75202348"/>
<dbReference type="KEGG" id="sdy:SDY_0397"/>
<dbReference type="PATRIC" id="fig|300267.13.peg.471"/>
<dbReference type="HOGENOM" id="CLU_070848_1_1_6"/>
<dbReference type="UniPathway" id="UPA00395"/>
<dbReference type="Proteomes" id="UP000002716">
    <property type="component" value="Chromosome"/>
</dbReference>
<dbReference type="GO" id="GO:0004848">
    <property type="term" value="F:ureidoglycolate hydrolase activity"/>
    <property type="evidence" value="ECO:0007669"/>
    <property type="project" value="InterPro"/>
</dbReference>
<dbReference type="GO" id="GO:0050385">
    <property type="term" value="F:ureidoglycolate lyase activity"/>
    <property type="evidence" value="ECO:0007669"/>
    <property type="project" value="UniProtKB-UniRule"/>
</dbReference>
<dbReference type="GO" id="GO:0000256">
    <property type="term" value="P:allantoin catabolic process"/>
    <property type="evidence" value="ECO:0007669"/>
    <property type="project" value="UniProtKB-UniRule"/>
</dbReference>
<dbReference type="GO" id="GO:0006145">
    <property type="term" value="P:purine nucleobase catabolic process"/>
    <property type="evidence" value="ECO:0007669"/>
    <property type="project" value="UniProtKB-UniRule"/>
</dbReference>
<dbReference type="CDD" id="cd20298">
    <property type="entry name" value="cupin_UAH"/>
    <property type="match status" value="1"/>
</dbReference>
<dbReference type="FunFam" id="2.60.120.480:FF:000001">
    <property type="entry name" value="Ureidoglycolate lyase"/>
    <property type="match status" value="1"/>
</dbReference>
<dbReference type="Gene3D" id="2.60.120.480">
    <property type="entry name" value="Ureidoglycolate hydrolase"/>
    <property type="match status" value="1"/>
</dbReference>
<dbReference type="HAMAP" id="MF_00616">
    <property type="entry name" value="Ureidogly_lyase"/>
    <property type="match status" value="1"/>
</dbReference>
<dbReference type="InterPro" id="IPR011051">
    <property type="entry name" value="RmlC_Cupin_sf"/>
</dbReference>
<dbReference type="InterPro" id="IPR047233">
    <property type="entry name" value="UAH_cupin"/>
</dbReference>
<dbReference type="InterPro" id="IPR007247">
    <property type="entry name" value="Ureidogly_lyase"/>
</dbReference>
<dbReference type="InterPro" id="IPR023525">
    <property type="entry name" value="Ureidogly_lyase_bac"/>
</dbReference>
<dbReference type="InterPro" id="IPR024060">
    <property type="entry name" value="Ureidoglycolate_lyase_dom_sf"/>
</dbReference>
<dbReference type="NCBIfam" id="NF002948">
    <property type="entry name" value="PRK03606.1-1"/>
    <property type="match status" value="1"/>
</dbReference>
<dbReference type="NCBIfam" id="NF009932">
    <property type="entry name" value="PRK13395.1"/>
    <property type="match status" value="1"/>
</dbReference>
<dbReference type="PANTHER" id="PTHR21221">
    <property type="entry name" value="UREIDOGLYCOLATE HYDROLASE"/>
    <property type="match status" value="1"/>
</dbReference>
<dbReference type="PANTHER" id="PTHR21221:SF1">
    <property type="entry name" value="UREIDOGLYCOLATE LYASE"/>
    <property type="match status" value="1"/>
</dbReference>
<dbReference type="Pfam" id="PF04115">
    <property type="entry name" value="Ureidogly_lyase"/>
    <property type="match status" value="1"/>
</dbReference>
<dbReference type="PIRSF" id="PIRSF017306">
    <property type="entry name" value="Ureidogly_hydro"/>
    <property type="match status" value="1"/>
</dbReference>
<dbReference type="SUPFAM" id="SSF51182">
    <property type="entry name" value="RmlC-like cupins"/>
    <property type="match status" value="1"/>
</dbReference>
<reference key="1">
    <citation type="journal article" date="2005" name="Nucleic Acids Res.">
        <title>Genome dynamics and diversity of Shigella species, the etiologic agents of bacillary dysentery.</title>
        <authorList>
            <person name="Yang F."/>
            <person name="Yang J."/>
            <person name="Zhang X."/>
            <person name="Chen L."/>
            <person name="Jiang Y."/>
            <person name="Yan Y."/>
            <person name="Tang X."/>
            <person name="Wang J."/>
            <person name="Xiong Z."/>
            <person name="Dong J."/>
            <person name="Xue Y."/>
            <person name="Zhu Y."/>
            <person name="Xu X."/>
            <person name="Sun L."/>
            <person name="Chen S."/>
            <person name="Nie H."/>
            <person name="Peng J."/>
            <person name="Xu J."/>
            <person name="Wang Y."/>
            <person name="Yuan Z."/>
            <person name="Wen Y."/>
            <person name="Yao Z."/>
            <person name="Shen Y."/>
            <person name="Qiang B."/>
            <person name="Hou Y."/>
            <person name="Yu J."/>
            <person name="Jin Q."/>
        </authorList>
    </citation>
    <scope>NUCLEOTIDE SEQUENCE [LARGE SCALE GENOMIC DNA]</scope>
    <source>
        <strain>Sd197</strain>
    </source>
</reference>
<sequence>MKLQVLPLSQEAFSAYGDVIETQQRDFFHINNGLVERYHDLALVEILEQDRTLISINRAQPANLPLTIHELERHPLGTQAFIPMKGEVFVVVVALGDDKPDLSTLRAFITNGEQGVNYHRNVWHHPLFAWQRVTDFLTIDRGGSDNCDVESIPEQELCFA</sequence>
<comment type="function">
    <text evidence="1">Catalyzes the catabolism of the allantoin degradation intermediate (S)-ureidoglycolate, generating urea and glyoxylate. Involved in the anaerobic utilization of allantoin as sole nitrogen source. Reinforces the induction of genes involved in the degradation of allantoin and glyoxylate by producing glyoxylate.</text>
</comment>
<comment type="catalytic activity">
    <reaction evidence="1">
        <text>(S)-ureidoglycolate = urea + glyoxylate</text>
        <dbReference type="Rhea" id="RHEA:11304"/>
        <dbReference type="ChEBI" id="CHEBI:16199"/>
        <dbReference type="ChEBI" id="CHEBI:36655"/>
        <dbReference type="ChEBI" id="CHEBI:57296"/>
        <dbReference type="EC" id="4.3.2.3"/>
    </reaction>
</comment>
<comment type="cofactor">
    <cofactor evidence="1">
        <name>Ni(2+)</name>
        <dbReference type="ChEBI" id="CHEBI:49786"/>
    </cofactor>
</comment>
<comment type="pathway">
    <text evidence="1">Nitrogen metabolism; (S)-allantoin degradation.</text>
</comment>
<comment type="subunit">
    <text evidence="1">Homodimer.</text>
</comment>
<comment type="similarity">
    <text evidence="1">Belongs to the ureidoglycolate lyase family.</text>
</comment>
<proteinExistence type="inferred from homology"/>
<protein>
    <recommendedName>
        <fullName evidence="1">Ureidoglycolate lyase</fullName>
        <ecNumber evidence="1">4.3.2.3</ecNumber>
    </recommendedName>
    <alternativeName>
        <fullName evidence="1">Ureidoglycolatase</fullName>
    </alternativeName>
</protein>
<gene>
    <name evidence="1" type="primary">allA</name>
    <name type="ordered locus">SDY_0397</name>
</gene>